<comment type="function">
    <text evidence="1">An accessory protein needed during the final step in the assembly of 30S ribosomal subunit, possibly for assembly of the head region. Essential for efficient processing of 16S rRNA. May be needed both before and after RbfA during the maturation of 16S rRNA. It has affinity for free ribosomal 30S subunits but not for 70S ribosomes.</text>
</comment>
<comment type="subunit">
    <text evidence="1">Binds ribosomal protein uS19.</text>
</comment>
<comment type="subcellular location">
    <subcellularLocation>
        <location evidence="1">Cytoplasm</location>
    </subcellularLocation>
</comment>
<comment type="domain">
    <text evidence="1">The PRC barrel domain binds ribosomal protein uS19.</text>
</comment>
<comment type="similarity">
    <text evidence="1">Belongs to the RimM family.</text>
</comment>
<keyword id="KW-0143">Chaperone</keyword>
<keyword id="KW-0963">Cytoplasm</keyword>
<keyword id="KW-1185">Reference proteome</keyword>
<keyword id="KW-0690">Ribosome biogenesis</keyword>
<keyword id="KW-0698">rRNA processing</keyword>
<reference key="1">
    <citation type="journal article" date="2006" name="Appl. Environ. Microbiol.">
        <title>Complete genome sequence of the marine, chemolithoautotrophic, ammonia-oxidizing bacterium Nitrosococcus oceani ATCC 19707.</title>
        <authorList>
            <person name="Klotz M.G."/>
            <person name="Arp D.J."/>
            <person name="Chain P.S.G."/>
            <person name="El-Sheikh A.F."/>
            <person name="Hauser L.J."/>
            <person name="Hommes N.G."/>
            <person name="Larimer F.W."/>
            <person name="Malfatti S.A."/>
            <person name="Norton J.M."/>
            <person name="Poret-Peterson A.T."/>
            <person name="Vergez L.M."/>
            <person name="Ward B.B."/>
        </authorList>
    </citation>
    <scope>NUCLEOTIDE SEQUENCE [LARGE SCALE GENOMIC DNA]</scope>
    <source>
        <strain>ATCC 19707 / BCRC 17464 / JCM 30415 / NCIMB 11848 / C-107</strain>
    </source>
</reference>
<dbReference type="EMBL" id="CP000127">
    <property type="protein sequence ID" value="ABA58717.1"/>
    <property type="molecule type" value="Genomic_DNA"/>
</dbReference>
<dbReference type="RefSeq" id="WP_002809448.1">
    <property type="nucleotide sequence ID" value="NC_007484.1"/>
</dbReference>
<dbReference type="SMR" id="Q3J8X9"/>
<dbReference type="FunCoup" id="Q3J8X9">
    <property type="interactions" value="434"/>
</dbReference>
<dbReference type="STRING" id="323261.Noc_2259"/>
<dbReference type="KEGG" id="noc:Noc_2259"/>
<dbReference type="eggNOG" id="COG0806">
    <property type="taxonomic scope" value="Bacteria"/>
</dbReference>
<dbReference type="HOGENOM" id="CLU_077636_1_0_6"/>
<dbReference type="InParanoid" id="Q3J8X9"/>
<dbReference type="Proteomes" id="UP000006838">
    <property type="component" value="Chromosome"/>
</dbReference>
<dbReference type="GO" id="GO:0005737">
    <property type="term" value="C:cytoplasm"/>
    <property type="evidence" value="ECO:0007669"/>
    <property type="project" value="UniProtKB-SubCell"/>
</dbReference>
<dbReference type="GO" id="GO:0005840">
    <property type="term" value="C:ribosome"/>
    <property type="evidence" value="ECO:0007669"/>
    <property type="project" value="InterPro"/>
</dbReference>
<dbReference type="GO" id="GO:0043022">
    <property type="term" value="F:ribosome binding"/>
    <property type="evidence" value="ECO:0007669"/>
    <property type="project" value="InterPro"/>
</dbReference>
<dbReference type="GO" id="GO:0042274">
    <property type="term" value="P:ribosomal small subunit biogenesis"/>
    <property type="evidence" value="ECO:0007669"/>
    <property type="project" value="UniProtKB-UniRule"/>
</dbReference>
<dbReference type="GO" id="GO:0006364">
    <property type="term" value="P:rRNA processing"/>
    <property type="evidence" value="ECO:0007669"/>
    <property type="project" value="UniProtKB-UniRule"/>
</dbReference>
<dbReference type="Gene3D" id="2.30.30.240">
    <property type="entry name" value="PRC-barrel domain"/>
    <property type="match status" value="1"/>
</dbReference>
<dbReference type="Gene3D" id="2.40.30.60">
    <property type="entry name" value="RimM"/>
    <property type="match status" value="1"/>
</dbReference>
<dbReference type="HAMAP" id="MF_00014">
    <property type="entry name" value="Ribosome_mat_RimM"/>
    <property type="match status" value="1"/>
</dbReference>
<dbReference type="InterPro" id="IPR011033">
    <property type="entry name" value="PRC_barrel-like_sf"/>
</dbReference>
<dbReference type="InterPro" id="IPR056792">
    <property type="entry name" value="PRC_RimM"/>
</dbReference>
<dbReference type="InterPro" id="IPR011961">
    <property type="entry name" value="RimM"/>
</dbReference>
<dbReference type="InterPro" id="IPR002676">
    <property type="entry name" value="RimM_N"/>
</dbReference>
<dbReference type="InterPro" id="IPR036976">
    <property type="entry name" value="RimM_N_sf"/>
</dbReference>
<dbReference type="InterPro" id="IPR009000">
    <property type="entry name" value="Transl_B-barrel_sf"/>
</dbReference>
<dbReference type="NCBIfam" id="TIGR02273">
    <property type="entry name" value="16S_RimM"/>
    <property type="match status" value="1"/>
</dbReference>
<dbReference type="PANTHER" id="PTHR33692">
    <property type="entry name" value="RIBOSOME MATURATION FACTOR RIMM"/>
    <property type="match status" value="1"/>
</dbReference>
<dbReference type="PANTHER" id="PTHR33692:SF1">
    <property type="entry name" value="RIBOSOME MATURATION FACTOR RIMM"/>
    <property type="match status" value="1"/>
</dbReference>
<dbReference type="Pfam" id="PF24986">
    <property type="entry name" value="PRC_RimM"/>
    <property type="match status" value="1"/>
</dbReference>
<dbReference type="Pfam" id="PF01782">
    <property type="entry name" value="RimM"/>
    <property type="match status" value="1"/>
</dbReference>
<dbReference type="SUPFAM" id="SSF50346">
    <property type="entry name" value="PRC-barrel domain"/>
    <property type="match status" value="1"/>
</dbReference>
<dbReference type="SUPFAM" id="SSF50447">
    <property type="entry name" value="Translation proteins"/>
    <property type="match status" value="1"/>
</dbReference>
<proteinExistence type="inferred from homology"/>
<feature type="chain" id="PRO_0000244141" description="Ribosome maturation factor RimM">
    <location>
        <begin position="1"/>
        <end position="175"/>
    </location>
</feature>
<feature type="domain" description="PRC barrel" evidence="1">
    <location>
        <begin position="103"/>
        <end position="175"/>
    </location>
</feature>
<evidence type="ECO:0000255" key="1">
    <source>
        <dbReference type="HAMAP-Rule" id="MF_00014"/>
    </source>
</evidence>
<name>RIMM_NITOC</name>
<accession>Q3J8X9</accession>
<organism>
    <name type="scientific">Nitrosococcus oceani (strain ATCC 19707 / BCRC 17464 / JCM 30415 / NCIMB 11848 / C-107)</name>
    <dbReference type="NCBI Taxonomy" id="323261"/>
    <lineage>
        <taxon>Bacteria</taxon>
        <taxon>Pseudomonadati</taxon>
        <taxon>Pseudomonadota</taxon>
        <taxon>Gammaproteobacteria</taxon>
        <taxon>Chromatiales</taxon>
        <taxon>Chromatiaceae</taxon>
        <taxon>Nitrosococcus</taxon>
    </lineage>
</organism>
<gene>
    <name evidence="1" type="primary">rimM</name>
    <name type="ordered locus">Noc_2259</name>
</gene>
<sequence length="175" mass="19983">MELGQEATDDKRYVLVGRISGLYGVQGWLRVYSYTQPRNNILDYEPWYLQQNGAWQARRLRKGRVQGKGIVVALEGIDERDVAALWVGCEIAVHRDQLPPPQEGEYYWSDLIGLQVITLQGEVLGQVDRLLETGANDVLVVRGERERLLPFLMGMIVKQVDLQQGLLTVDWDPDF</sequence>
<protein>
    <recommendedName>
        <fullName evidence="1">Ribosome maturation factor RimM</fullName>
    </recommendedName>
</protein>